<name>CBLN2_MOUSE</name>
<gene>
    <name type="primary">Cbln2</name>
</gene>
<accession>Q8BGU2</accession>
<feature type="signal peptide" evidence="2">
    <location>
        <begin position="1"/>
        <end position="51"/>
    </location>
</feature>
<feature type="chain" id="PRO_0000003552" description="Cerebellin-2">
    <location>
        <begin position="52"/>
        <end position="224"/>
    </location>
</feature>
<feature type="domain" description="C1q" evidence="3">
    <location>
        <begin position="88"/>
        <end position="224"/>
    </location>
</feature>
<feature type="glycosylation site" description="N-linked (GlcNAc...) asparagine" evidence="6 10">
    <location>
        <position position="53"/>
    </location>
</feature>
<feature type="glycosylation site" description="N-linked (GlcNAc...) asparagine" evidence="6 10">
    <location>
        <position position="110"/>
    </location>
</feature>
<feature type="disulfide bond" description="Interchain" evidence="1">
    <location>
        <position position="64"/>
    </location>
</feature>
<feature type="disulfide bond" description="Interchain" evidence="1">
    <location>
        <position position="68"/>
    </location>
</feature>
<feature type="mutagenesis site" description="No effect on its ability to form homohexameric or heteromeric complexes with other CBLN family members. Increased interaction with NRXN1 and NRXN3. Total loss of N-glycosylation; when associated with Q-110." evidence="6 10">
    <original>N</original>
    <variation>Q</variation>
    <location>
        <position position="53"/>
    </location>
</feature>
<feature type="mutagenesis site" description="No effect on its ability to form homohexameric or heteromeric complexes with other CBLN family members. Increased interaction with NRXN1. Total loss of N-glycosylation; when associated with Q-53." evidence="6 10">
    <original>N</original>
    <variation>Q</variation>
    <location>
        <position position="110"/>
    </location>
</feature>
<keyword id="KW-1015">Disulfide bond</keyword>
<keyword id="KW-0325">Glycoprotein</keyword>
<keyword id="KW-1185">Reference proteome</keyword>
<keyword id="KW-0964">Secreted</keyword>
<keyword id="KW-0732">Signal</keyword>
<sequence>MPAPGQGPRGPLLSMPGRRGALREPADFGSSLGAVLALLLLLLPACCPVRAQNDTEPIVLEGKCLVVCDSSPSGDGAVTSSLGISVRSGSAKVAFSATRSTNHEPSEMSNRTMTIYFDQVLVNIGNHFDLASSIFVAPRKGIYSFSFHVVKVYNRQTIQVSLMQNGYPVISAFAGDQDVTREAASNGVLLLMEREDKVHLKLERGNLMGGWKYSTFSGFLVFPL</sequence>
<comment type="function">
    <text evidence="7 9 11 12">Acts as a synaptic organizer in specific subsets of neurons in the brain (PubMed:21410790, PubMed:29691328). Essential for long-term maintenance but not establishment of excitatory synapses (PubMed:29691328, PubMed:30287486). Functions as part of a trans-synaptic complex by binding to postsynaptic GRID1 and presynaptic neurexins. This interaction helps regulate the activity of NMDA and AMPA receptors at hippocampal synapses without affecting synapse formation. NRXN1B-CBLN2-GRID1 complex transduce presynaptic signals into postsynaptic NMDAR response. NRXN3B-CBLN2-GRID1 complex transduce presynaptic signals into postsynaptic AMPAR response (PubMed:34135511).</text>
</comment>
<comment type="subunit">
    <text evidence="1 5 7 8 10 12">Homohexamer; disulfide-linked homotrimers. The trimers are assembled via the globular C1q domains. The trimers associate via N-terminal cysteine residues to form disulfide-linked hexamers (By similarity). May form homooligomers or heterooligomers with CBLN1 and CBLN3 prior to secretion (PubMed:29782851). Once secreted, does not interact with other CBLN family members (PubMed:22220752). Interacts with GRID2, and more weakly with GRID1 (PubMed:34135511). Interacts with NRXN1 and NRXN2 long and short isoforms produced by alternative promoter usage (PubMed:21410790, PubMed:22220752, PubMed:29782851, PubMed:34135511). Weakly interacts with NRXN3 short isoform and not at all with NRXN3 long isoform (PubMed:22220752, PubMed:29782851, PubMed:34135511).</text>
</comment>
<comment type="subcellular location">
    <subcellularLocation>
        <location evidence="5 6 10 12">Secreted</location>
    </subcellularLocation>
</comment>
<comment type="tissue specificity">
    <text evidence="4 9 11">Expressed in various brain regions with higher levels in the olfactory bulb, cerebral cortex, certain thalamic and hypothalamic nuclei, superior and inferior colliculi and some brainstem nuclei. Highly expressed in the dorsal medial habenula.</text>
</comment>
<comment type="developmental stage">
    <text evidence="4">In the developing brain, expressed as early as 10-13 dpc. Expression level peaks at 18 dpc and gradually decreases afterwards.</text>
</comment>
<comment type="disruption phenotype">
    <text evidence="9 11">Mice show impaired synaptic transmission within 3 weeks in interpeduncular target neurons whereas significant decrease in both the synapse density and size seen only after 3 months (PubMed:30287486). Display impaired passive avoidance learning, spatial learning and short-term memory (PubMed:30287486). Double CBLN1 and CBLN2 knockout mice exhibit gait abnormalities, impairments in balance and coordination and develop seizures (PubMed:29691328). Synapse density in the hippocampus is normal in 1-2 months old mice, but severely decreased in 6 month old mice (PubMed:29691328). Triple CBLN1, CBLN2 and CBLN4 knockout mice exhibit impairments in sensory processing and sensorimotor gating, in addition to severe motor deficits, seizures and reduced synapse density in the hippocampus of aging mice (PubMed:29691328).</text>
</comment>
<organism>
    <name type="scientific">Mus musculus</name>
    <name type="common">Mouse</name>
    <dbReference type="NCBI Taxonomy" id="10090"/>
    <lineage>
        <taxon>Eukaryota</taxon>
        <taxon>Metazoa</taxon>
        <taxon>Chordata</taxon>
        <taxon>Craniata</taxon>
        <taxon>Vertebrata</taxon>
        <taxon>Euteleostomi</taxon>
        <taxon>Mammalia</taxon>
        <taxon>Eutheria</taxon>
        <taxon>Euarchontoglires</taxon>
        <taxon>Glires</taxon>
        <taxon>Rodentia</taxon>
        <taxon>Myomorpha</taxon>
        <taxon>Muroidea</taxon>
        <taxon>Muridae</taxon>
        <taxon>Murinae</taxon>
        <taxon>Mus</taxon>
        <taxon>Mus</taxon>
    </lineage>
</organism>
<protein>
    <recommendedName>
        <fullName>Cerebellin-2</fullName>
    </recommendedName>
</protein>
<evidence type="ECO:0000250" key="1">
    <source>
        <dbReference type="UniProtKB" id="Q9R171"/>
    </source>
</evidence>
<evidence type="ECO:0000255" key="2"/>
<evidence type="ECO:0000255" key="3">
    <source>
        <dbReference type="PROSITE-ProRule" id="PRU00368"/>
    </source>
</evidence>
<evidence type="ECO:0000269" key="4">
    <source>
    </source>
</evidence>
<evidence type="ECO:0000269" key="5">
    <source>
    </source>
</evidence>
<evidence type="ECO:0000269" key="6">
    <source>
    </source>
</evidence>
<evidence type="ECO:0000269" key="7">
    <source>
    </source>
</evidence>
<evidence type="ECO:0000269" key="8">
    <source>
    </source>
</evidence>
<evidence type="ECO:0000269" key="9">
    <source>
    </source>
</evidence>
<evidence type="ECO:0000269" key="10">
    <source>
    </source>
</evidence>
<evidence type="ECO:0000269" key="11">
    <source>
    </source>
</evidence>
<evidence type="ECO:0000269" key="12">
    <source>
    </source>
</evidence>
<dbReference type="EMBL" id="AK032112">
    <property type="protein sequence ID" value="BAC27710.1"/>
    <property type="molecule type" value="mRNA"/>
</dbReference>
<dbReference type="EMBL" id="AK042555">
    <property type="protein sequence ID" value="BAC31290.1"/>
    <property type="molecule type" value="mRNA"/>
</dbReference>
<dbReference type="EMBL" id="BC055682">
    <property type="protein sequence ID" value="AAH55682.1"/>
    <property type="molecule type" value="mRNA"/>
</dbReference>
<dbReference type="CCDS" id="CCDS29388.1"/>
<dbReference type="RefSeq" id="NP_001289285.1">
    <property type="nucleotide sequence ID" value="NM_001302356.2"/>
</dbReference>
<dbReference type="RefSeq" id="NP_001348071.1">
    <property type="nucleotide sequence ID" value="NM_001361142.1"/>
</dbReference>
<dbReference type="RefSeq" id="NP_001348072.1">
    <property type="nucleotide sequence ID" value="NM_001361143.1"/>
</dbReference>
<dbReference type="RefSeq" id="NP_001348073.1">
    <property type="nucleotide sequence ID" value="NM_001361144.1"/>
</dbReference>
<dbReference type="RefSeq" id="NP_001348074.1">
    <property type="nucleotide sequence ID" value="NM_001361145.1"/>
</dbReference>
<dbReference type="RefSeq" id="NP_766221.1">
    <property type="nucleotide sequence ID" value="NM_172633.4"/>
</dbReference>
<dbReference type="RefSeq" id="XP_006526510.1">
    <property type="nucleotide sequence ID" value="XM_006526447.3"/>
</dbReference>
<dbReference type="RefSeq" id="XP_006526512.1">
    <property type="nucleotide sequence ID" value="XM_006526449.3"/>
</dbReference>
<dbReference type="RefSeq" id="XP_006526513.1">
    <property type="nucleotide sequence ID" value="XM_006526450.3"/>
</dbReference>
<dbReference type="RefSeq" id="XP_017173295.1">
    <property type="nucleotide sequence ID" value="XM_017317806.1"/>
</dbReference>
<dbReference type="RefSeq" id="XP_036016848.1">
    <property type="nucleotide sequence ID" value="XM_036160955.1"/>
</dbReference>
<dbReference type="SMR" id="Q8BGU2"/>
<dbReference type="FunCoup" id="Q8BGU2">
    <property type="interactions" value="81"/>
</dbReference>
<dbReference type="STRING" id="10090.ENSMUSP00000113695"/>
<dbReference type="GlyConnect" id="2205">
    <property type="glycosylation" value="8 N-Linked glycans (1 site)"/>
</dbReference>
<dbReference type="GlyCosmos" id="Q8BGU2">
    <property type="glycosylation" value="2 sites, 8 glycans"/>
</dbReference>
<dbReference type="GlyGen" id="Q8BGU2">
    <property type="glycosylation" value="3 sites, 8 N-linked glycans (2 sites), 1 O-linked glycan (1 site)"/>
</dbReference>
<dbReference type="iPTMnet" id="Q8BGU2"/>
<dbReference type="PhosphoSitePlus" id="Q8BGU2"/>
<dbReference type="PaxDb" id="10090-ENSMUSP00000113695"/>
<dbReference type="PeptideAtlas" id="Q8BGU2"/>
<dbReference type="ProteomicsDB" id="265343"/>
<dbReference type="Antibodypedia" id="42209">
    <property type="antibodies" value="163 antibodies from 26 providers"/>
</dbReference>
<dbReference type="DNASU" id="12405"/>
<dbReference type="Ensembl" id="ENSMUST00000068423.10">
    <property type="protein sequence ID" value="ENSMUSP00000068863.4"/>
    <property type="gene ID" value="ENSMUSG00000024647.15"/>
</dbReference>
<dbReference type="Ensembl" id="ENSMUST00000122079.8">
    <property type="protein sequence ID" value="ENSMUSP00000113695.2"/>
    <property type="gene ID" value="ENSMUSG00000024647.15"/>
</dbReference>
<dbReference type="Ensembl" id="ENSMUST00000122464.8">
    <property type="protein sequence ID" value="ENSMUSP00000113996.2"/>
    <property type="gene ID" value="ENSMUSG00000024647.15"/>
</dbReference>
<dbReference type="Ensembl" id="ENSMUST00000169470.2">
    <property type="protein sequence ID" value="ENSMUSP00000126810.2"/>
    <property type="gene ID" value="ENSMUSG00000024647.15"/>
</dbReference>
<dbReference type="GeneID" id="12405"/>
<dbReference type="KEGG" id="mmu:12405"/>
<dbReference type="UCSC" id="uc008fva.1">
    <property type="organism name" value="mouse"/>
</dbReference>
<dbReference type="AGR" id="MGI:88282"/>
<dbReference type="CTD" id="147381"/>
<dbReference type="MGI" id="MGI:88282">
    <property type="gene designation" value="Cbln2"/>
</dbReference>
<dbReference type="VEuPathDB" id="HostDB:ENSMUSG00000024647"/>
<dbReference type="eggNOG" id="ENOG502QT93">
    <property type="taxonomic scope" value="Eukaryota"/>
</dbReference>
<dbReference type="GeneTree" id="ENSGT00940000159988"/>
<dbReference type="HOGENOM" id="CLU_001074_8_2_1"/>
<dbReference type="InParanoid" id="Q8BGU2"/>
<dbReference type="OMA" id="CSGQNDT"/>
<dbReference type="OrthoDB" id="10070467at2759"/>
<dbReference type="PhylomeDB" id="Q8BGU2"/>
<dbReference type="TreeFam" id="TF329591"/>
<dbReference type="BioGRID-ORCS" id="12405">
    <property type="hits" value="2 hits in 78 CRISPR screens"/>
</dbReference>
<dbReference type="ChiTaRS" id="Cbln2">
    <property type="organism name" value="mouse"/>
</dbReference>
<dbReference type="PRO" id="PR:Q8BGU2"/>
<dbReference type="Proteomes" id="UP000000589">
    <property type="component" value="Chromosome 18"/>
</dbReference>
<dbReference type="RNAct" id="Q8BGU2">
    <property type="molecule type" value="protein"/>
</dbReference>
<dbReference type="Bgee" id="ENSMUSG00000024647">
    <property type="expression patterns" value="Expressed in habenula and 101 other cell types or tissues"/>
</dbReference>
<dbReference type="GO" id="GO:0005615">
    <property type="term" value="C:extracellular space"/>
    <property type="evidence" value="ECO:0000314"/>
    <property type="project" value="MGI"/>
</dbReference>
<dbReference type="GO" id="GO:0098978">
    <property type="term" value="C:glutamatergic synapse"/>
    <property type="evidence" value="ECO:0000314"/>
    <property type="project" value="SynGO"/>
</dbReference>
<dbReference type="GO" id="GO:0043083">
    <property type="term" value="C:synaptic cleft"/>
    <property type="evidence" value="ECO:0000314"/>
    <property type="project" value="UniProt"/>
</dbReference>
<dbReference type="GO" id="GO:0098820">
    <property type="term" value="C:trans-synaptic protein complex"/>
    <property type="evidence" value="ECO:0000314"/>
    <property type="project" value="UniProt"/>
</dbReference>
<dbReference type="GO" id="GO:0099558">
    <property type="term" value="P:maintenance of synapse structure"/>
    <property type="evidence" value="ECO:0000315"/>
    <property type="project" value="UniProtKB"/>
</dbReference>
<dbReference type="GO" id="GO:0051965">
    <property type="term" value="P:positive regulation of synapse assembly"/>
    <property type="evidence" value="ECO:0000314"/>
    <property type="project" value="MGI"/>
</dbReference>
<dbReference type="GO" id="GO:0098814">
    <property type="term" value="P:spontaneous synaptic transmission"/>
    <property type="evidence" value="ECO:0000315"/>
    <property type="project" value="UniProtKB"/>
</dbReference>
<dbReference type="GO" id="GO:0007416">
    <property type="term" value="P:synapse assembly"/>
    <property type="evidence" value="ECO:0000314"/>
    <property type="project" value="MGI"/>
</dbReference>
<dbReference type="GO" id="GO:0050808">
    <property type="term" value="P:synapse organization"/>
    <property type="evidence" value="ECO:0000315"/>
    <property type="project" value="UniProtKB"/>
</dbReference>
<dbReference type="GO" id="GO:0099550">
    <property type="term" value="P:trans-synaptic signaling, modulating synaptic transmission"/>
    <property type="evidence" value="ECO:0000314"/>
    <property type="project" value="SynGO"/>
</dbReference>
<dbReference type="FunFam" id="2.60.120.40:FF:000002">
    <property type="entry name" value="Cerebellin 4"/>
    <property type="match status" value="1"/>
</dbReference>
<dbReference type="Gene3D" id="2.60.120.40">
    <property type="match status" value="1"/>
</dbReference>
<dbReference type="InterPro" id="IPR001073">
    <property type="entry name" value="C1q_dom"/>
</dbReference>
<dbReference type="InterPro" id="IPR050822">
    <property type="entry name" value="Cerebellin_Synaptic_Org"/>
</dbReference>
<dbReference type="InterPro" id="IPR008983">
    <property type="entry name" value="Tumour_necrosis_fac-like_dom"/>
</dbReference>
<dbReference type="PANTHER" id="PTHR22923:SF50">
    <property type="entry name" value="CEREBELLIN-2"/>
    <property type="match status" value="1"/>
</dbReference>
<dbReference type="PANTHER" id="PTHR22923">
    <property type="entry name" value="CEREBELLIN-RELATED"/>
    <property type="match status" value="1"/>
</dbReference>
<dbReference type="Pfam" id="PF00386">
    <property type="entry name" value="C1q"/>
    <property type="match status" value="1"/>
</dbReference>
<dbReference type="PRINTS" id="PR00007">
    <property type="entry name" value="COMPLEMNTC1Q"/>
</dbReference>
<dbReference type="SMART" id="SM00110">
    <property type="entry name" value="C1Q"/>
    <property type="match status" value="1"/>
</dbReference>
<dbReference type="SUPFAM" id="SSF49842">
    <property type="entry name" value="TNF-like"/>
    <property type="match status" value="1"/>
</dbReference>
<dbReference type="PROSITE" id="PS50871">
    <property type="entry name" value="C1Q"/>
    <property type="match status" value="1"/>
</dbReference>
<proteinExistence type="evidence at protein level"/>
<reference key="1">
    <citation type="journal article" date="2005" name="Science">
        <title>The transcriptional landscape of the mammalian genome.</title>
        <authorList>
            <person name="Carninci P."/>
            <person name="Kasukawa T."/>
            <person name="Katayama S."/>
            <person name="Gough J."/>
            <person name="Frith M.C."/>
            <person name="Maeda N."/>
            <person name="Oyama R."/>
            <person name="Ravasi T."/>
            <person name="Lenhard B."/>
            <person name="Wells C."/>
            <person name="Kodzius R."/>
            <person name="Shimokawa K."/>
            <person name="Bajic V.B."/>
            <person name="Brenner S.E."/>
            <person name="Batalov S."/>
            <person name="Forrest A.R."/>
            <person name="Zavolan M."/>
            <person name="Davis M.J."/>
            <person name="Wilming L.G."/>
            <person name="Aidinis V."/>
            <person name="Allen J.E."/>
            <person name="Ambesi-Impiombato A."/>
            <person name="Apweiler R."/>
            <person name="Aturaliya R.N."/>
            <person name="Bailey T.L."/>
            <person name="Bansal M."/>
            <person name="Baxter L."/>
            <person name="Beisel K.W."/>
            <person name="Bersano T."/>
            <person name="Bono H."/>
            <person name="Chalk A.M."/>
            <person name="Chiu K.P."/>
            <person name="Choudhary V."/>
            <person name="Christoffels A."/>
            <person name="Clutterbuck D.R."/>
            <person name="Crowe M.L."/>
            <person name="Dalla E."/>
            <person name="Dalrymple B.P."/>
            <person name="de Bono B."/>
            <person name="Della Gatta G."/>
            <person name="di Bernardo D."/>
            <person name="Down T."/>
            <person name="Engstrom P."/>
            <person name="Fagiolini M."/>
            <person name="Faulkner G."/>
            <person name="Fletcher C.F."/>
            <person name="Fukushima T."/>
            <person name="Furuno M."/>
            <person name="Futaki S."/>
            <person name="Gariboldi M."/>
            <person name="Georgii-Hemming P."/>
            <person name="Gingeras T.R."/>
            <person name="Gojobori T."/>
            <person name="Green R.E."/>
            <person name="Gustincich S."/>
            <person name="Harbers M."/>
            <person name="Hayashi Y."/>
            <person name="Hensch T.K."/>
            <person name="Hirokawa N."/>
            <person name="Hill D."/>
            <person name="Huminiecki L."/>
            <person name="Iacono M."/>
            <person name="Ikeo K."/>
            <person name="Iwama A."/>
            <person name="Ishikawa T."/>
            <person name="Jakt M."/>
            <person name="Kanapin A."/>
            <person name="Katoh M."/>
            <person name="Kawasawa Y."/>
            <person name="Kelso J."/>
            <person name="Kitamura H."/>
            <person name="Kitano H."/>
            <person name="Kollias G."/>
            <person name="Krishnan S.P."/>
            <person name="Kruger A."/>
            <person name="Kummerfeld S.K."/>
            <person name="Kurochkin I.V."/>
            <person name="Lareau L.F."/>
            <person name="Lazarevic D."/>
            <person name="Lipovich L."/>
            <person name="Liu J."/>
            <person name="Liuni S."/>
            <person name="McWilliam S."/>
            <person name="Madan Babu M."/>
            <person name="Madera M."/>
            <person name="Marchionni L."/>
            <person name="Matsuda H."/>
            <person name="Matsuzawa S."/>
            <person name="Miki H."/>
            <person name="Mignone F."/>
            <person name="Miyake S."/>
            <person name="Morris K."/>
            <person name="Mottagui-Tabar S."/>
            <person name="Mulder N."/>
            <person name="Nakano N."/>
            <person name="Nakauchi H."/>
            <person name="Ng P."/>
            <person name="Nilsson R."/>
            <person name="Nishiguchi S."/>
            <person name="Nishikawa S."/>
            <person name="Nori F."/>
            <person name="Ohara O."/>
            <person name="Okazaki Y."/>
            <person name="Orlando V."/>
            <person name="Pang K.C."/>
            <person name="Pavan W.J."/>
            <person name="Pavesi G."/>
            <person name="Pesole G."/>
            <person name="Petrovsky N."/>
            <person name="Piazza S."/>
            <person name="Reed J."/>
            <person name="Reid J.F."/>
            <person name="Ring B.Z."/>
            <person name="Ringwald M."/>
            <person name="Rost B."/>
            <person name="Ruan Y."/>
            <person name="Salzberg S.L."/>
            <person name="Sandelin A."/>
            <person name="Schneider C."/>
            <person name="Schoenbach C."/>
            <person name="Sekiguchi K."/>
            <person name="Semple C.A."/>
            <person name="Seno S."/>
            <person name="Sessa L."/>
            <person name="Sheng Y."/>
            <person name="Shibata Y."/>
            <person name="Shimada H."/>
            <person name="Shimada K."/>
            <person name="Silva D."/>
            <person name="Sinclair B."/>
            <person name="Sperling S."/>
            <person name="Stupka E."/>
            <person name="Sugiura K."/>
            <person name="Sultana R."/>
            <person name="Takenaka Y."/>
            <person name="Taki K."/>
            <person name="Tammoja K."/>
            <person name="Tan S.L."/>
            <person name="Tang S."/>
            <person name="Taylor M.S."/>
            <person name="Tegner J."/>
            <person name="Teichmann S.A."/>
            <person name="Ueda H.R."/>
            <person name="van Nimwegen E."/>
            <person name="Verardo R."/>
            <person name="Wei C.L."/>
            <person name="Yagi K."/>
            <person name="Yamanishi H."/>
            <person name="Zabarovsky E."/>
            <person name="Zhu S."/>
            <person name="Zimmer A."/>
            <person name="Hide W."/>
            <person name="Bult C."/>
            <person name="Grimmond S.M."/>
            <person name="Teasdale R.D."/>
            <person name="Liu E.T."/>
            <person name="Brusic V."/>
            <person name="Quackenbush J."/>
            <person name="Wahlestedt C."/>
            <person name="Mattick J.S."/>
            <person name="Hume D.A."/>
            <person name="Kai C."/>
            <person name="Sasaki D."/>
            <person name="Tomaru Y."/>
            <person name="Fukuda S."/>
            <person name="Kanamori-Katayama M."/>
            <person name="Suzuki M."/>
            <person name="Aoki J."/>
            <person name="Arakawa T."/>
            <person name="Iida J."/>
            <person name="Imamura K."/>
            <person name="Itoh M."/>
            <person name="Kato T."/>
            <person name="Kawaji H."/>
            <person name="Kawagashira N."/>
            <person name="Kawashima T."/>
            <person name="Kojima M."/>
            <person name="Kondo S."/>
            <person name="Konno H."/>
            <person name="Nakano K."/>
            <person name="Ninomiya N."/>
            <person name="Nishio T."/>
            <person name="Okada M."/>
            <person name="Plessy C."/>
            <person name="Shibata K."/>
            <person name="Shiraki T."/>
            <person name="Suzuki S."/>
            <person name="Tagami M."/>
            <person name="Waki K."/>
            <person name="Watahiki A."/>
            <person name="Okamura-Oho Y."/>
            <person name="Suzuki H."/>
            <person name="Kawai J."/>
            <person name="Hayashizaki Y."/>
        </authorList>
    </citation>
    <scope>NUCLEOTIDE SEQUENCE [LARGE SCALE MRNA]</scope>
    <source>
        <strain>C57BL/6J</strain>
        <tissue>Cerebellum</tissue>
        <tissue>Medulla oblongata</tissue>
    </source>
</reference>
<reference key="2">
    <citation type="journal article" date="2004" name="Genome Res.">
        <title>The status, quality, and expansion of the NIH full-length cDNA project: the Mammalian Gene Collection (MGC).</title>
        <authorList>
            <consortium name="The MGC Project Team"/>
        </authorList>
    </citation>
    <scope>NUCLEOTIDE SEQUENCE [LARGE SCALE MRNA]</scope>
    <source>
        <strain>C57BL/6J</strain>
        <tissue>Brain</tissue>
    </source>
</reference>
<reference key="3">
    <citation type="journal article" date="2006" name="Eur. J. Neurosci.">
        <title>Distinct expression of Cbln family mRNAs in developing and adult mouse brains.</title>
        <authorList>
            <person name="Miura E."/>
            <person name="Iijima T."/>
            <person name="Yuzaki M."/>
            <person name="Watanabe M."/>
        </authorList>
    </citation>
    <scope>TISSUE SPECIFICITY</scope>
    <scope>DEVELOPMENTAL STAGE</scope>
</reference>
<reference key="4">
    <citation type="journal article" date="2006" name="Mol. Cell. Biol.">
        <title>Cbln1 is essential for interaction-dependent secretion of cbln3.</title>
        <authorList>
            <person name="Bao D."/>
            <person name="Pang Z."/>
            <person name="Morgan M.A."/>
            <person name="Parris J."/>
            <person name="Rong Y."/>
            <person name="Li L."/>
            <person name="Morgan J.I."/>
        </authorList>
    </citation>
    <scope>SELF-ASSOCIATION</scope>
    <scope>SUBCELLULAR LOCATION</scope>
    <scope>INTERACTION WITH CBLN1; CBLN3 AND CBLN4</scope>
</reference>
<reference key="5">
    <citation type="journal article" date="2007" name="Eur. J. Neurosci.">
        <title>Characterization of a transneuronal cytokine family Cbln - regulation of secretion by heteromeric assembly.</title>
        <authorList>
            <person name="Iijima T."/>
            <person name="Miura E."/>
            <person name="Matsuda K."/>
            <person name="Kamekawa Y."/>
            <person name="Watanabe M."/>
            <person name="Yuzaki M."/>
        </authorList>
    </citation>
    <scope>OLIGOMERIZATION WITH CBLN1; CBLN2; CBLN3 AND CBLN4</scope>
    <scope>SUBCELLULAR LOCATION</scope>
    <scope>GLYCOSYLATION AT ASN-53 AND ASN-110</scope>
    <scope>MUTAGENESIS OF ASN-53 AND ASN-110</scope>
</reference>
<reference key="6">
    <citation type="journal article" date="2011" name="Eur. J. Neurosci.">
        <title>Cbln family proteins promote synapse formation by regulating distinct neurexin signaling pathways in various brain regions.</title>
        <authorList>
            <person name="Matsuda K."/>
            <person name="Yuzaki M."/>
        </authorList>
    </citation>
    <scope>FUNCTION</scope>
    <scope>INTERACTION WITH NRXN1</scope>
</reference>
<reference key="7">
    <citation type="journal article" date="2012" name="J. Neurochem.">
        <title>The Cbln family of proteins interact with multiple signaling pathways.</title>
        <authorList>
            <person name="Wei P."/>
            <person name="Pattarini R."/>
            <person name="Rong Y."/>
            <person name="Guo H."/>
            <person name="Bansal P.K."/>
            <person name="Kusnoor S.V."/>
            <person name="Deutch A.Y."/>
            <person name="Parris J."/>
            <person name="Morgan J.I."/>
        </authorList>
    </citation>
    <scope>INTERACTION WITH GRID1; GRID2; NRXN1; NRXN2 AND NRXN3</scope>
</reference>
<reference key="8">
    <citation type="journal article" date="2018" name="Brain Res.">
        <title>Glycosylation of Cblns attenuates their receptor binding.</title>
        <authorList>
            <person name="Rong Y."/>
            <person name="Bansal P.K."/>
            <person name="Wei P."/>
            <person name="Guo H."/>
            <person name="Correia K."/>
            <person name="Parris J."/>
            <person name="Morgan J.I."/>
        </authorList>
    </citation>
    <scope>GLYCOSYLATION AT ASN-53 AND ASN-110</scope>
    <scope>INTERACTION WITH NRXN1 AND NRXN3</scope>
    <scope>SUBUNIT</scope>
    <scope>SUBCELLULAR LOCATION</scope>
    <scope>MUTAGENESIS OF ASN-53 AND ASN-110</scope>
</reference>
<reference key="9">
    <citation type="journal article" date="2018" name="J. Neurosci.">
        <title>Genetic Ablation of All Cerebellins Reveals Synapse Organizer Functions in Multiple Regions Throughout the Brain.</title>
        <authorList>
            <person name="Seigneur E."/>
            <person name="Suedhof T.C."/>
        </authorList>
    </citation>
    <scope>FUNCTION</scope>
    <scope>DISRUPTION PHENOTYPE</scope>
    <scope>TISSUE SPECIFICITY</scope>
</reference>
<reference key="10">
    <citation type="journal article" date="2018" name="Proc. Natl. Acad. Sci. U.S.A.">
        <title>Cbln2 and Cbln4 are expressed in distinct medial habenula-interpeduncular projections and contribute to different behavioral outputs.</title>
        <authorList>
            <person name="Seigneur E."/>
            <person name="Polepalli J.S."/>
            <person name="Suedhof T.C."/>
        </authorList>
    </citation>
    <scope>FUNCTION</scope>
    <scope>DISRUPTION PHENOTYPE</scope>
    <scope>TISSUE SPECIFICITY</scope>
</reference>
<reference key="11">
    <citation type="journal article" date="2021" name="Nature">
        <title>GluD1 is a signal transduction device disguised as an ionotropic receptor.</title>
        <authorList>
            <person name="Dai J."/>
            <person name="Patzke C."/>
            <person name="Liakath-Ali K."/>
            <person name="Seigneur E."/>
            <person name="Suedhof T.C."/>
        </authorList>
    </citation>
    <scope>FUNCTION</scope>
    <scope>INTERACTION WITH GRID1; NRX1B AND NRX3B</scope>
    <scope>SUBCELLULAR LOCATION</scope>
</reference>